<gene>
    <name evidence="1" type="primary">ppc</name>
    <name type="ordered locus">YE0116</name>
</gene>
<dbReference type="EC" id="4.1.1.31" evidence="1"/>
<dbReference type="EMBL" id="AM286415">
    <property type="protein sequence ID" value="CAL10258.1"/>
    <property type="molecule type" value="Genomic_DNA"/>
</dbReference>
<dbReference type="RefSeq" id="WP_011815299.1">
    <property type="nucleotide sequence ID" value="NC_008800.1"/>
</dbReference>
<dbReference type="RefSeq" id="YP_001004510.1">
    <property type="nucleotide sequence ID" value="NC_008800.1"/>
</dbReference>
<dbReference type="SMR" id="A1JI20"/>
<dbReference type="KEGG" id="yen:YE0116"/>
<dbReference type="PATRIC" id="fig|393305.7.peg.207"/>
<dbReference type="eggNOG" id="COG2352">
    <property type="taxonomic scope" value="Bacteria"/>
</dbReference>
<dbReference type="HOGENOM" id="CLU_006557_2_0_6"/>
<dbReference type="OrthoDB" id="9768133at2"/>
<dbReference type="Proteomes" id="UP000000642">
    <property type="component" value="Chromosome"/>
</dbReference>
<dbReference type="GO" id="GO:0005829">
    <property type="term" value="C:cytosol"/>
    <property type="evidence" value="ECO:0007669"/>
    <property type="project" value="TreeGrafter"/>
</dbReference>
<dbReference type="GO" id="GO:0000287">
    <property type="term" value="F:magnesium ion binding"/>
    <property type="evidence" value="ECO:0007669"/>
    <property type="project" value="UniProtKB-UniRule"/>
</dbReference>
<dbReference type="GO" id="GO:0008964">
    <property type="term" value="F:phosphoenolpyruvate carboxylase activity"/>
    <property type="evidence" value="ECO:0007669"/>
    <property type="project" value="UniProtKB-UniRule"/>
</dbReference>
<dbReference type="GO" id="GO:0015977">
    <property type="term" value="P:carbon fixation"/>
    <property type="evidence" value="ECO:0007669"/>
    <property type="project" value="UniProtKB-UniRule"/>
</dbReference>
<dbReference type="GO" id="GO:0006107">
    <property type="term" value="P:oxaloacetate metabolic process"/>
    <property type="evidence" value="ECO:0007669"/>
    <property type="project" value="UniProtKB-UniRule"/>
</dbReference>
<dbReference type="GO" id="GO:0006099">
    <property type="term" value="P:tricarboxylic acid cycle"/>
    <property type="evidence" value="ECO:0007669"/>
    <property type="project" value="InterPro"/>
</dbReference>
<dbReference type="FunFam" id="1.20.1440.90:FF:000002">
    <property type="entry name" value="Phosphoenolpyruvate carboxylase"/>
    <property type="match status" value="1"/>
</dbReference>
<dbReference type="Gene3D" id="1.20.1440.90">
    <property type="entry name" value="Phosphoenolpyruvate/pyruvate domain"/>
    <property type="match status" value="1"/>
</dbReference>
<dbReference type="HAMAP" id="MF_00595">
    <property type="entry name" value="PEPcase_type1"/>
    <property type="match status" value="1"/>
</dbReference>
<dbReference type="InterPro" id="IPR021135">
    <property type="entry name" value="PEP_COase"/>
</dbReference>
<dbReference type="InterPro" id="IPR022805">
    <property type="entry name" value="PEP_COase_bac/pln-type"/>
</dbReference>
<dbReference type="InterPro" id="IPR018129">
    <property type="entry name" value="PEP_COase_Lys_AS"/>
</dbReference>
<dbReference type="InterPro" id="IPR033129">
    <property type="entry name" value="PEPCASE_His_AS"/>
</dbReference>
<dbReference type="InterPro" id="IPR015813">
    <property type="entry name" value="Pyrv/PenolPyrv_kinase-like_dom"/>
</dbReference>
<dbReference type="NCBIfam" id="NF000584">
    <property type="entry name" value="PRK00009.1"/>
    <property type="match status" value="1"/>
</dbReference>
<dbReference type="PANTHER" id="PTHR30523">
    <property type="entry name" value="PHOSPHOENOLPYRUVATE CARBOXYLASE"/>
    <property type="match status" value="1"/>
</dbReference>
<dbReference type="PANTHER" id="PTHR30523:SF6">
    <property type="entry name" value="PHOSPHOENOLPYRUVATE CARBOXYLASE"/>
    <property type="match status" value="1"/>
</dbReference>
<dbReference type="Pfam" id="PF00311">
    <property type="entry name" value="PEPcase"/>
    <property type="match status" value="1"/>
</dbReference>
<dbReference type="PRINTS" id="PR00150">
    <property type="entry name" value="PEPCARBXLASE"/>
</dbReference>
<dbReference type="SUPFAM" id="SSF51621">
    <property type="entry name" value="Phosphoenolpyruvate/pyruvate domain"/>
    <property type="match status" value="1"/>
</dbReference>
<dbReference type="PROSITE" id="PS00781">
    <property type="entry name" value="PEPCASE_1"/>
    <property type="match status" value="1"/>
</dbReference>
<dbReference type="PROSITE" id="PS00393">
    <property type="entry name" value="PEPCASE_2"/>
    <property type="match status" value="1"/>
</dbReference>
<organism>
    <name type="scientific">Yersinia enterocolitica serotype O:8 / biotype 1B (strain NCTC 13174 / 8081)</name>
    <dbReference type="NCBI Taxonomy" id="393305"/>
    <lineage>
        <taxon>Bacteria</taxon>
        <taxon>Pseudomonadati</taxon>
        <taxon>Pseudomonadota</taxon>
        <taxon>Gammaproteobacteria</taxon>
        <taxon>Enterobacterales</taxon>
        <taxon>Yersiniaceae</taxon>
        <taxon>Yersinia</taxon>
    </lineage>
</organism>
<reference key="1">
    <citation type="journal article" date="2006" name="PLoS Genet.">
        <title>The complete genome sequence and comparative genome analysis of the high pathogenicity Yersinia enterocolitica strain 8081.</title>
        <authorList>
            <person name="Thomson N.R."/>
            <person name="Howard S."/>
            <person name="Wren B.W."/>
            <person name="Holden M.T.G."/>
            <person name="Crossman L."/>
            <person name="Challis G.L."/>
            <person name="Churcher C."/>
            <person name="Mungall K."/>
            <person name="Brooks K."/>
            <person name="Chillingworth T."/>
            <person name="Feltwell T."/>
            <person name="Abdellah Z."/>
            <person name="Hauser H."/>
            <person name="Jagels K."/>
            <person name="Maddison M."/>
            <person name="Moule S."/>
            <person name="Sanders M."/>
            <person name="Whitehead S."/>
            <person name="Quail M.A."/>
            <person name="Dougan G."/>
            <person name="Parkhill J."/>
            <person name="Prentice M.B."/>
        </authorList>
    </citation>
    <scope>NUCLEOTIDE SEQUENCE [LARGE SCALE GENOMIC DNA]</scope>
    <source>
        <strain>NCTC 13174 / 8081</strain>
    </source>
</reference>
<keyword id="KW-0120">Carbon dioxide fixation</keyword>
<keyword id="KW-0456">Lyase</keyword>
<keyword id="KW-0460">Magnesium</keyword>
<feature type="chain" id="PRO_1000025604" description="Phosphoenolpyruvate carboxylase">
    <location>
        <begin position="1"/>
        <end position="879"/>
    </location>
</feature>
<feature type="active site" evidence="1">
    <location>
        <position position="137"/>
    </location>
</feature>
<feature type="active site" evidence="1">
    <location>
        <position position="545"/>
    </location>
</feature>
<accession>A1JI20</accession>
<sequence>MNEQYSAMRSNVSMLGTLLGDTIKEALGEHILEKVETIRKLSKSSRAGNEASRQELLTTLQNLSNDELLPVARAFSQFLNLTNTAEQYHSISPHGEAASNPEALAQLFTRLKDKKLSEQDMRSAVDELSIELVLTAHPTEITRRTLIHKLVEVNTCLSQLDHNDLADYERNKIMRRLRQLVAQSWHTDEIRKIRPSPVDEAKWGFAVVENSLWEGVPAFLREFNEQLQNSLDYRLPVEAVPIRFTSWMGGDRDGNPNVTAEITRHVLLLSRWKATDLFLRDIQVLVSELSMSECTPELRELAGGEEVLEPYRELMKRVRTQLTNTQAYLEARLKGERVLPPTDLLVSNDQLWDPLYACYQSLKACGMEIIANGQLLDTLRRVRCFGVPLVRIDVRQESTRHTDAIAELTRYLGLGDYESWSEADKQAFLIRELNSKRPLVPLKWEPSADTQEVLETCRVIAEAPQGSIAAYVISMAKVPSDVLAVHLLLKEAGCPFTLPVAPLFETLDDLNNADDVMTQLLNIDWYRGLIQGKQMVMIGYSDSAKDAGVMAASWAQYRAQDALIKTCEKAGISLTLFHGRGGSIGRGGAPAHAALLSQPPGSLKGGLRVTEQGEMIRFKFGLPEVTISSLALYASAVLEANLLPPPEPKKEWNEVMDILSDASCEMYRGYVRENPQFVPYFRAATPELELGKLPLGSRPAKRRPNGGVESLRAIPWIFAWTQNRLMLPAWLGAGAGLQKAIDAGKKEVLATMCRDWPFFSTRIGMLEMVFAKADLWLAEYYDQRLVDKSLWPLGQQLRDQLEADIKVVLAIANDDHLMADLPWIAESIALRNVYTDPLNVLQAELLHRSRQQENAADACVEQALMVTIAGVAAGMRNTG</sequence>
<protein>
    <recommendedName>
        <fullName evidence="1">Phosphoenolpyruvate carboxylase</fullName>
        <shortName evidence="1">PEPC</shortName>
        <shortName evidence="1">PEPCase</shortName>
        <ecNumber evidence="1">4.1.1.31</ecNumber>
    </recommendedName>
</protein>
<proteinExistence type="inferred from homology"/>
<name>CAPP_YERE8</name>
<evidence type="ECO:0000255" key="1">
    <source>
        <dbReference type="HAMAP-Rule" id="MF_00595"/>
    </source>
</evidence>
<comment type="function">
    <text evidence="1">Forms oxaloacetate, a four-carbon dicarboxylic acid source for the tricarboxylic acid cycle.</text>
</comment>
<comment type="catalytic activity">
    <reaction evidence="1">
        <text>oxaloacetate + phosphate = phosphoenolpyruvate + hydrogencarbonate</text>
        <dbReference type="Rhea" id="RHEA:28370"/>
        <dbReference type="ChEBI" id="CHEBI:16452"/>
        <dbReference type="ChEBI" id="CHEBI:17544"/>
        <dbReference type="ChEBI" id="CHEBI:43474"/>
        <dbReference type="ChEBI" id="CHEBI:58702"/>
        <dbReference type="EC" id="4.1.1.31"/>
    </reaction>
</comment>
<comment type="cofactor">
    <cofactor evidence="1">
        <name>Mg(2+)</name>
        <dbReference type="ChEBI" id="CHEBI:18420"/>
    </cofactor>
</comment>
<comment type="similarity">
    <text evidence="1">Belongs to the PEPCase type 1 family.</text>
</comment>